<comment type="function">
    <text evidence="4">Nitrate reductase is a key enzyme involved in the first step of nitrate assimilation. Catalyzes the reduction of nitrate to nitrite, using ferredoxin as the electron donor. Can use reduced methyl viologen but neither NADPH nor NADH as electron donors.</text>
</comment>
<comment type="catalytic activity">
    <reaction evidence="4">
        <text>nitrite + 2 oxidized [2Fe-2S]-[ferredoxin] + H2O = nitrate + 2 reduced [2Fe-2S]-[ferredoxin] + 2 H(+)</text>
        <dbReference type="Rhea" id="RHEA:21828"/>
        <dbReference type="Rhea" id="RHEA-COMP:10000"/>
        <dbReference type="Rhea" id="RHEA-COMP:10001"/>
        <dbReference type="ChEBI" id="CHEBI:15377"/>
        <dbReference type="ChEBI" id="CHEBI:15378"/>
        <dbReference type="ChEBI" id="CHEBI:16301"/>
        <dbReference type="ChEBI" id="CHEBI:17632"/>
        <dbReference type="ChEBI" id="CHEBI:33737"/>
        <dbReference type="ChEBI" id="CHEBI:33738"/>
        <dbReference type="EC" id="1.7.7.2"/>
    </reaction>
</comment>
<comment type="cofactor">
    <cofactor evidence="9">
        <name>[4Fe-4S] cluster</name>
        <dbReference type="ChEBI" id="CHEBI:49883"/>
    </cofactor>
</comment>
<comment type="cofactor">
    <cofactor evidence="1">
        <name>Mo-bis(molybdopterin guanine dinucleotide)</name>
        <dbReference type="ChEBI" id="CHEBI:60539"/>
    </cofactor>
    <text evidence="1">Binds 1 molybdenum-bis(molybdopterin guanine dinucleotide) (Mo-bis-MGD) cofactor per subunit.</text>
</comment>
<comment type="activity regulation">
    <text evidence="4">Inhibited by cyanide and azide.</text>
</comment>
<comment type="biophysicochemical properties">
    <kinetics>
        <KM evidence="4">0.95 mM for nitrate</KM>
        <KM evidence="4">0.066 mM for methyl viologen</KM>
    </kinetics>
    <phDependence>
        <text evidence="4">Optimum pH is 9.</text>
    </phDependence>
    <temperatureDependence>
        <text evidence="4">Optimum temperature is 80 degrees Celsius at 2.2 and 3.1 M NaCl, and 60 degrees Celsius at 0.9 and 1.3 M NaCl.</text>
    </temperatureDependence>
</comment>
<comment type="pathway">
    <text evidence="10">Nitrogen metabolism; nitrate reduction (assimilation).</text>
</comment>
<comment type="subunit">
    <text evidence="4 10">Is probably a monomer (PubMed:16182473). Initially characterized as a dimer of proteins with a MW of 105 and 50 kDa (PubMed:11731152).</text>
</comment>
<comment type="subcellular location">
    <subcellularLocation>
        <location evidence="8">Cytoplasm</location>
    </subcellularLocation>
</comment>
<comment type="induction">
    <text evidence="5">Repressed by the presence of ammonium as nitrogen source.</text>
</comment>
<comment type="miscellaneous">
    <text evidence="4">Enzyme stability and activity depend upon the salt concentration.</text>
</comment>
<comment type="similarity">
    <text evidence="8">Belongs to the prokaryotic molybdopterin-containing oxidoreductase family. NasA/NapA/NarB subfamily.</text>
</comment>
<comment type="sequence caution" evidence="8">
    <conflict type="erroneous initiation">
        <sequence resource="EMBL-CDS" id="AFK19694"/>
    </conflict>
    <text>Truncated N-terminus.</text>
</comment>
<name>NASA_HALMT</name>
<reference evidence="12" key="1">
    <citation type="journal article" date="2005" name="Gene">
        <title>Identification and transcriptional analysis of nitrate assimilation genes in the halophilic archaeon Haloferax mediterranei.</title>
        <authorList>
            <person name="Lledo B."/>
            <person name="Marhuenda-Egea F.C."/>
            <person name="Martinez-Espinosa R.M."/>
            <person name="Bonete M.J."/>
        </authorList>
    </citation>
    <scope>NUCLEOTIDE SEQUENCE [GENOMIC DNA]</scope>
    <scope>SUBUNIT</scope>
    <scope>INDUCTION</scope>
    <scope>PATHWAY</scope>
    <source>
        <strain>ATCC 33500 / DSM 1411 / JCM 8866 / NBRC 14739 / NCIMB 2177 / R-4</strain>
    </source>
</reference>
<reference evidence="11" key="2">
    <citation type="journal article" date="2012" name="J. Bacteriol.">
        <title>Complete genome sequence of the metabolically versatile halophilic archaeon Haloferax mediterranei, a poly(3-hydroxybutyrate-co-3-hydroxyvalerate) producer.</title>
        <authorList>
            <person name="Han J."/>
            <person name="Zhang F."/>
            <person name="Hou J."/>
            <person name="Liu X."/>
            <person name="Li M."/>
            <person name="Liu H."/>
            <person name="Cai L."/>
            <person name="Zhang B."/>
            <person name="Chen Y."/>
            <person name="Zhou J."/>
            <person name="Hu S."/>
            <person name="Xiang H."/>
        </authorList>
    </citation>
    <scope>NUCLEOTIDE SEQUENCE [LARGE SCALE GENOMIC DNA]</scope>
    <source>
        <strain>ATCC 33500 / DSM 1411 / JCM 8866 / NBRC 14739 / NCIMB 2177 / R-4</strain>
    </source>
</reference>
<reference evidence="13" key="3">
    <citation type="journal article" date="2014" name="PLoS Genet.">
        <title>Phylogenetically driven sequencing of extremely halophilic archaea reveals strategies for static and dynamic osmo-response.</title>
        <authorList>
            <person name="Becker E.A."/>
            <person name="Seitzer P.M."/>
            <person name="Tritt A."/>
            <person name="Larsen D."/>
            <person name="Krusor M."/>
            <person name="Yao A.I."/>
            <person name="Wu D."/>
            <person name="Madern D."/>
            <person name="Eisen J.A."/>
            <person name="Darling A.E."/>
            <person name="Facciotti M.T."/>
        </authorList>
    </citation>
    <scope>NUCLEOTIDE SEQUENCE [LARGE SCALE GENOMIC DNA]</scope>
    <source>
        <strain>ATCC 33500 / DSM 1411 / JCM 8866 / NBRC 14739 / NCIMB 2177 / R-4</strain>
    </source>
</reference>
<reference key="4">
    <citation type="journal article" date="2001" name="FEMS Microbiol. Lett.">
        <title>Assimilatory nitrate reductase from the haloarchaeon Haloferax mediterranei: purification and characterisation.</title>
        <authorList>
            <person name="Martinez-Espinosa R.M."/>
            <person name="Marhuenda-Egea F.C."/>
            <person name="Bonete M.J."/>
        </authorList>
    </citation>
    <scope>FUNCTION</scope>
    <scope>CATALYTIC ACTIVITY</scope>
    <scope>COFACTOR</scope>
    <scope>SUBSTRATE SPECIFICITY</scope>
    <scope>SUBUNIT</scope>
    <scope>BIOPHYSICOCHEMICAL PROPERTIES</scope>
    <scope>ACTIVITY REGULATION</scope>
</reference>
<proteinExistence type="evidence at protein level"/>
<accession>I3R634</accession>
<accession>Q703N5</accession>
<sequence>MPRNLRFLSVVNHVTKQVPTTCMRCAVGCGHVHLGSENAYGLETVRGDPSHPVNNGLACGRGIRESADPAGEWLTRPLVREDGELVQTSWSDAMARVGATIRTAVATDPDEVAVLGSGQQTNEAAYALGKLARAGIGTRNYDANTTLCMASAVTAYYRAFGSDAPPPTYDDIPNAETHLVWGANPAVAHPVMFRWIRQSATDGRLVVVDPVETKTAAVADDHVSVAPGGDLALARAILRHLVDTDQIDESFVRSNTEGFDDVVSALPSVTDAAARAGVSLDTVEELAALLDAPTLIYWGMGVNQSVRGTATAGALVNLCLASGNLGPGTGPFSLTGQANSMGTRVCSSKGTWSGHRPFEHPDHRRAVAEAWDVPVSRLPDDSGPGPVGILDSSPSVVWTVATNPLAGFPDATAAREVLRDSFLVVQDAFRSDTVELADVVLPAATWGESEGTAMNMERTVSRIRAATETPPGVRQDLDIIADVAARVAPGLLPRPPVSPSAIFDEFAALTEGTDADCSGISYTRLDGERAVRWPAPEPNSDAGYRYYDPSTSRWTFPTPSGKARFSTLDGEPLPEPVDGDYPLTLTTGREADGYNTGVRSRSDTPEEPVARVNPETVDTYHDAVADTDGELRTTVVSRRASVSVTLDRDDAVPPGLVWLSIHHPMTNQLTSPAVDPQSNEPNFKQCAVRFVHPDAPAKADFLAAEVSD</sequence>
<organism>
    <name type="scientific">Haloferax mediterranei (strain ATCC 33500 / DSM 1411 / JCM 8866 / NBRC 14739 / NCIMB 2177 / R-4)</name>
    <name type="common">Halobacterium mediterranei</name>
    <dbReference type="NCBI Taxonomy" id="523841"/>
    <lineage>
        <taxon>Archaea</taxon>
        <taxon>Methanobacteriati</taxon>
        <taxon>Methanobacteriota</taxon>
        <taxon>Stenosarchaea group</taxon>
        <taxon>Halobacteria</taxon>
        <taxon>Halobacteriales</taxon>
        <taxon>Haloferacaceae</taxon>
        <taxon>Haloferax</taxon>
    </lineage>
</organism>
<protein>
    <recommendedName>
        <fullName evidence="6 7">Assimilatory nitrate reductase</fullName>
        <ecNumber evidence="4">1.7.7.2</ecNumber>
    </recommendedName>
</protein>
<dbReference type="EC" id="1.7.7.2" evidence="4"/>
<dbReference type="EMBL" id="AJ621498">
    <property type="protein sequence ID" value="CAF19042.1"/>
    <property type="molecule type" value="Genomic_DNA"/>
</dbReference>
<dbReference type="EMBL" id="CP001868">
    <property type="protein sequence ID" value="AFK19694.2"/>
    <property type="status" value="ALT_INIT"/>
    <property type="molecule type" value="Genomic_DNA"/>
</dbReference>
<dbReference type="EMBL" id="AOLO01000009">
    <property type="protein sequence ID" value="EMA00016.1"/>
    <property type="molecule type" value="Genomic_DNA"/>
</dbReference>
<dbReference type="RefSeq" id="WP_004059340.1">
    <property type="nucleotide sequence ID" value="NC_017941.2"/>
</dbReference>
<dbReference type="SMR" id="I3R634"/>
<dbReference type="STRING" id="523841.HFX_2002"/>
<dbReference type="PaxDb" id="523841-HFX_2002"/>
<dbReference type="GeneID" id="40155088"/>
<dbReference type="KEGG" id="hme:HFX_2002"/>
<dbReference type="PATRIC" id="fig|523841.21.peg.2383"/>
<dbReference type="eggNOG" id="arCOG01491">
    <property type="taxonomic scope" value="Archaea"/>
</dbReference>
<dbReference type="OrthoDB" id="23466at2157"/>
<dbReference type="UniPathway" id="UPA00653"/>
<dbReference type="Proteomes" id="UP000006469">
    <property type="component" value="Chromosome"/>
</dbReference>
<dbReference type="Proteomes" id="UP000011603">
    <property type="component" value="Unassembled WGS sequence"/>
</dbReference>
<dbReference type="GO" id="GO:0005737">
    <property type="term" value="C:cytoplasm"/>
    <property type="evidence" value="ECO:0007669"/>
    <property type="project" value="UniProtKB-SubCell"/>
</dbReference>
<dbReference type="GO" id="GO:0016020">
    <property type="term" value="C:membrane"/>
    <property type="evidence" value="ECO:0007669"/>
    <property type="project" value="TreeGrafter"/>
</dbReference>
<dbReference type="GO" id="GO:0051539">
    <property type="term" value="F:4 iron, 4 sulfur cluster binding"/>
    <property type="evidence" value="ECO:0007669"/>
    <property type="project" value="UniProtKB-KW"/>
</dbReference>
<dbReference type="GO" id="GO:0047889">
    <property type="term" value="F:ferredoxin-nitrate reductase activity"/>
    <property type="evidence" value="ECO:0007669"/>
    <property type="project" value="UniProtKB-EC"/>
</dbReference>
<dbReference type="GO" id="GO:0046872">
    <property type="term" value="F:metal ion binding"/>
    <property type="evidence" value="ECO:0007669"/>
    <property type="project" value="UniProtKB-KW"/>
</dbReference>
<dbReference type="GO" id="GO:0043546">
    <property type="term" value="F:molybdopterin cofactor binding"/>
    <property type="evidence" value="ECO:0007669"/>
    <property type="project" value="InterPro"/>
</dbReference>
<dbReference type="GO" id="GO:0042128">
    <property type="term" value="P:nitrate assimilation"/>
    <property type="evidence" value="ECO:0007669"/>
    <property type="project" value="UniProtKB-UniPathway"/>
</dbReference>
<dbReference type="Gene3D" id="2.40.40.20">
    <property type="match status" value="1"/>
</dbReference>
<dbReference type="Gene3D" id="3.40.50.740">
    <property type="match status" value="1"/>
</dbReference>
<dbReference type="Gene3D" id="2.20.25.90">
    <property type="entry name" value="ADC-like domains"/>
    <property type="match status" value="1"/>
</dbReference>
<dbReference type="Gene3D" id="3.40.228.10">
    <property type="entry name" value="Dimethylsulfoxide Reductase, domain 2"/>
    <property type="match status" value="1"/>
</dbReference>
<dbReference type="InterPro" id="IPR009010">
    <property type="entry name" value="Asp_de-COase-like_dom_sf"/>
</dbReference>
<dbReference type="InterPro" id="IPR006657">
    <property type="entry name" value="MoPterin_dinucl-bd_dom"/>
</dbReference>
<dbReference type="InterPro" id="IPR006656">
    <property type="entry name" value="Mopterin_OxRdtase"/>
</dbReference>
<dbReference type="InterPro" id="IPR006963">
    <property type="entry name" value="Mopterin_OxRdtase_4Fe-4S_dom"/>
</dbReference>
<dbReference type="InterPro" id="IPR054894">
    <property type="entry name" value="Nitr_red_NasA"/>
</dbReference>
<dbReference type="InterPro" id="IPR050123">
    <property type="entry name" value="Prok_molybdopt-oxidoreductase"/>
</dbReference>
<dbReference type="NCBIfam" id="NF041323">
    <property type="entry name" value="Nitr_red_NasA_Halo"/>
    <property type="match status" value="1"/>
</dbReference>
<dbReference type="PANTHER" id="PTHR43105:SF10">
    <property type="entry name" value="NADH-QUINONE OXIDOREDUCTASE SUBUNIT G"/>
    <property type="match status" value="1"/>
</dbReference>
<dbReference type="PANTHER" id="PTHR43105">
    <property type="entry name" value="RESPIRATORY NITRATE REDUCTASE"/>
    <property type="match status" value="1"/>
</dbReference>
<dbReference type="Pfam" id="PF04879">
    <property type="entry name" value="Molybdop_Fe4S4"/>
    <property type="match status" value="1"/>
</dbReference>
<dbReference type="Pfam" id="PF00384">
    <property type="entry name" value="Molybdopterin"/>
    <property type="match status" value="1"/>
</dbReference>
<dbReference type="Pfam" id="PF01568">
    <property type="entry name" value="Molydop_binding"/>
    <property type="match status" value="1"/>
</dbReference>
<dbReference type="PIRSF" id="PIRSF000144">
    <property type="entry name" value="CbbBc"/>
    <property type="match status" value="1"/>
</dbReference>
<dbReference type="SMART" id="SM00926">
    <property type="entry name" value="Molybdop_Fe4S4"/>
    <property type="match status" value="1"/>
</dbReference>
<dbReference type="SUPFAM" id="SSF50692">
    <property type="entry name" value="ADC-like"/>
    <property type="match status" value="1"/>
</dbReference>
<dbReference type="SUPFAM" id="SSF53706">
    <property type="entry name" value="Formate dehydrogenase/DMSO reductase, domains 1-3"/>
    <property type="match status" value="1"/>
</dbReference>
<evidence type="ECO:0000250" key="1">
    <source>
        <dbReference type="UniProtKB" id="Q57366"/>
    </source>
</evidence>
<evidence type="ECO:0000255" key="2">
    <source>
        <dbReference type="PROSITE-ProRule" id="PRU01004"/>
    </source>
</evidence>
<evidence type="ECO:0000256" key="3">
    <source>
        <dbReference type="SAM" id="MobiDB-lite"/>
    </source>
</evidence>
<evidence type="ECO:0000269" key="4">
    <source>
    </source>
</evidence>
<evidence type="ECO:0000269" key="5">
    <source>
    </source>
</evidence>
<evidence type="ECO:0000303" key="6">
    <source>
    </source>
</evidence>
<evidence type="ECO:0000303" key="7">
    <source>
    </source>
</evidence>
<evidence type="ECO:0000305" key="8"/>
<evidence type="ECO:0000305" key="9">
    <source>
    </source>
</evidence>
<evidence type="ECO:0000305" key="10">
    <source>
    </source>
</evidence>
<evidence type="ECO:0000312" key="11">
    <source>
        <dbReference type="EMBL" id="AFK19694.2"/>
    </source>
</evidence>
<evidence type="ECO:0000312" key="12">
    <source>
        <dbReference type="EMBL" id="CAF19042.1"/>
    </source>
</evidence>
<evidence type="ECO:0000312" key="13">
    <source>
        <dbReference type="EMBL" id="EMA00016.1"/>
    </source>
</evidence>
<keyword id="KW-0004">4Fe-4S</keyword>
<keyword id="KW-0963">Cytoplasm</keyword>
<keyword id="KW-0408">Iron</keyword>
<keyword id="KW-0411">Iron-sulfur</keyword>
<keyword id="KW-0479">Metal-binding</keyword>
<keyword id="KW-0500">Molybdenum</keyword>
<keyword id="KW-0534">Nitrate assimilation</keyword>
<keyword id="KW-0560">Oxidoreductase</keyword>
<feature type="chain" id="PRO_0000428892" description="Assimilatory nitrate reductase">
    <location>
        <begin position="1"/>
        <end position="708"/>
    </location>
</feature>
<feature type="domain" description="4Fe-4S Mo/W bis-MGD-type" evidence="2">
    <location>
        <begin position="15"/>
        <end position="73"/>
    </location>
</feature>
<feature type="region of interest" description="Disordered" evidence="3">
    <location>
        <begin position="586"/>
        <end position="613"/>
    </location>
</feature>
<feature type="binding site" evidence="2">
    <location>
        <position position="22"/>
    </location>
    <ligand>
        <name>[4Fe-4S] cluster</name>
        <dbReference type="ChEBI" id="CHEBI:49883"/>
    </ligand>
</feature>
<feature type="binding site" evidence="2">
    <location>
        <position position="25"/>
    </location>
    <ligand>
        <name>[4Fe-4S] cluster</name>
        <dbReference type="ChEBI" id="CHEBI:49883"/>
    </ligand>
</feature>
<feature type="binding site" evidence="2">
    <location>
        <position position="29"/>
    </location>
    <ligand>
        <name>[4Fe-4S] cluster</name>
        <dbReference type="ChEBI" id="CHEBI:49883"/>
    </ligand>
</feature>
<feature type="binding site" evidence="2">
    <location>
        <position position="59"/>
    </location>
    <ligand>
        <name>[4Fe-4S] cluster</name>
        <dbReference type="ChEBI" id="CHEBI:49883"/>
    </ligand>
</feature>
<feature type="sequence conflict" description="In Ref. 1; CAF19042." evidence="8" ref="1">
    <original>A</original>
    <variation>R</variation>
    <location>
        <position position="200"/>
    </location>
</feature>
<feature type="sequence conflict" description="In Ref. 1; CAF19042." evidence="8" ref="1">
    <original>L</original>
    <variation>I</variation>
    <location>
        <position position="241"/>
    </location>
</feature>
<feature type="sequence conflict" description="In Ref. 1; CAF19042." evidence="8" ref="1">
    <original>SSKGTW</original>
    <variation>PRKNV</variation>
    <location>
        <begin position="347"/>
        <end position="352"/>
    </location>
</feature>
<feature type="sequence conflict" description="In Ref. 1; CAF19042." evidence="8" ref="1">
    <original>T</original>
    <variation>S</variation>
    <location>
        <position position="445"/>
    </location>
</feature>
<feature type="sequence conflict" description="In Ref. 1; CAF19042." evidence="8" ref="1">
    <original>A</original>
    <variation>P</variation>
    <location>
        <position position="453"/>
    </location>
</feature>
<feature type="sequence conflict" description="In Ref. 1; CAF19042." evidence="8" ref="1">
    <original>P</original>
    <variation>R</variation>
    <location>
        <position position="538"/>
    </location>
</feature>
<feature type="sequence conflict" description="In Ref. 1; CAF19042." evidence="8" ref="1">
    <original>T</original>
    <variation>R</variation>
    <location>
        <position position="555"/>
    </location>
</feature>
<feature type="sequence conflict" description="In Ref. 1; CAF19042." evidence="8" ref="1">
    <original>VNPETV</original>
    <variation>STPRPS</variation>
    <location>
        <begin position="612"/>
        <end position="617"/>
    </location>
</feature>
<gene>
    <name evidence="7" type="primary">nasA</name>
    <name type="ordered locus">HFX_2002</name>
    <name type="ORF">C439_11788</name>
</gene>